<proteinExistence type="evidence at transcript level"/>
<keyword id="KW-0067">ATP-binding</keyword>
<keyword id="KW-0143">Chaperone</keyword>
<keyword id="KW-0378">Hydrolase</keyword>
<keyword id="KW-0472">Membrane</keyword>
<keyword id="KW-0496">Mitochondrion</keyword>
<keyword id="KW-0999">Mitochondrion inner membrane</keyword>
<keyword id="KW-0547">Nucleotide-binding</keyword>
<keyword id="KW-0597">Phosphoprotein</keyword>
<keyword id="KW-1185">Reference proteome</keyword>
<keyword id="KW-0812">Transmembrane</keyword>
<keyword id="KW-1133">Transmembrane helix</keyword>
<feature type="chain" id="PRO_0000284062" description="Mitochondrial chaperone BCS1">
    <location>
        <begin position="1"/>
        <end position="419"/>
    </location>
</feature>
<feature type="topological domain" description="Mitochondrial intermembrane" evidence="3">
    <location>
        <begin position="1"/>
        <end position="15"/>
    </location>
</feature>
<feature type="transmembrane region" description="Helical" evidence="3">
    <location>
        <begin position="16"/>
        <end position="32"/>
    </location>
</feature>
<feature type="topological domain" description="Mitochondrial matrix" evidence="3">
    <location>
        <begin position="33"/>
        <end position="419"/>
    </location>
</feature>
<feature type="binding site" evidence="3">
    <location>
        <begin position="230"/>
        <end position="237"/>
    </location>
    <ligand>
        <name>ATP</name>
        <dbReference type="ChEBI" id="CHEBI:30616"/>
    </ligand>
</feature>
<feature type="modified residue" description="Phosphotyrosine" evidence="2">
    <location>
        <position position="181"/>
    </location>
</feature>
<gene>
    <name type="primary">BCS1L</name>
</gene>
<accession>Q5E9H5</accession>
<evidence type="ECO:0000250" key="1">
    <source>
        <dbReference type="UniProtKB" id="P32839"/>
    </source>
</evidence>
<evidence type="ECO:0000250" key="2">
    <source>
        <dbReference type="UniProtKB" id="Q9Y276"/>
    </source>
</evidence>
<evidence type="ECO:0000255" key="3"/>
<evidence type="ECO:0000305" key="4"/>
<organism>
    <name type="scientific">Bos taurus</name>
    <name type="common">Bovine</name>
    <dbReference type="NCBI Taxonomy" id="9913"/>
    <lineage>
        <taxon>Eukaryota</taxon>
        <taxon>Metazoa</taxon>
        <taxon>Chordata</taxon>
        <taxon>Craniata</taxon>
        <taxon>Vertebrata</taxon>
        <taxon>Euteleostomi</taxon>
        <taxon>Mammalia</taxon>
        <taxon>Eutheria</taxon>
        <taxon>Laurasiatheria</taxon>
        <taxon>Artiodactyla</taxon>
        <taxon>Ruminantia</taxon>
        <taxon>Pecora</taxon>
        <taxon>Bovidae</taxon>
        <taxon>Bovinae</taxon>
        <taxon>Bos</taxon>
    </lineage>
</organism>
<protein>
    <recommendedName>
        <fullName>Mitochondrial chaperone BCS1</fullName>
        <ecNumber evidence="1">3.6.1.-</ecNumber>
    </recommendedName>
    <alternativeName>
        <fullName>BCS1-like protein</fullName>
    </alternativeName>
</protein>
<dbReference type="EC" id="3.6.1.-" evidence="1"/>
<dbReference type="EMBL" id="BT020945">
    <property type="protein sequence ID" value="AAX08962.1"/>
    <property type="molecule type" value="mRNA"/>
</dbReference>
<dbReference type="EMBL" id="BC103135">
    <property type="protein sequence ID" value="AAI03136.1"/>
    <property type="molecule type" value="mRNA"/>
</dbReference>
<dbReference type="RefSeq" id="NP_001015671.1">
    <property type="nucleotide sequence ID" value="NM_001015671.1"/>
</dbReference>
<dbReference type="RefSeq" id="XP_005202918.1">
    <property type="nucleotide sequence ID" value="XM_005202861.4"/>
</dbReference>
<dbReference type="RefSeq" id="XP_005202919.1">
    <property type="nucleotide sequence ID" value="XM_005202862.2"/>
</dbReference>
<dbReference type="RefSeq" id="XP_010800664.1">
    <property type="nucleotide sequence ID" value="XM_010802362.4"/>
</dbReference>
<dbReference type="RefSeq" id="XP_024832648.1">
    <property type="nucleotide sequence ID" value="XM_024976880.2"/>
</dbReference>
<dbReference type="RefSeq" id="XP_059732008.1">
    <property type="nucleotide sequence ID" value="XM_059876025.1"/>
</dbReference>
<dbReference type="RefSeq" id="XP_059732026.1">
    <property type="nucleotide sequence ID" value="XM_059876043.1"/>
</dbReference>
<dbReference type="SMR" id="Q5E9H5"/>
<dbReference type="FunCoup" id="Q5E9H5">
    <property type="interactions" value="1414"/>
</dbReference>
<dbReference type="STRING" id="9913.ENSBTAP00000004967"/>
<dbReference type="PaxDb" id="9913-ENSBTAP00000004967"/>
<dbReference type="Ensembl" id="ENSBTAT00000004967.2">
    <property type="protein sequence ID" value="ENSBTAP00000004967.1"/>
    <property type="gene ID" value="ENSBTAG00000003813.2"/>
</dbReference>
<dbReference type="GeneID" id="539713"/>
<dbReference type="KEGG" id="bta:539713"/>
<dbReference type="CTD" id="617"/>
<dbReference type="VEuPathDB" id="HostDB:ENSBTAG00000003813"/>
<dbReference type="VGNC" id="VGNC:26456">
    <property type="gene designation" value="BCS1L"/>
</dbReference>
<dbReference type="eggNOG" id="KOG0743">
    <property type="taxonomic scope" value="Eukaryota"/>
</dbReference>
<dbReference type="GeneTree" id="ENSGT00390000005415"/>
<dbReference type="HOGENOM" id="CLU_010189_6_2_1"/>
<dbReference type="InParanoid" id="Q5E9H5"/>
<dbReference type="OMA" id="WMTLYQR"/>
<dbReference type="OrthoDB" id="10251412at2759"/>
<dbReference type="TreeFam" id="TF315009"/>
<dbReference type="Proteomes" id="UP000009136">
    <property type="component" value="Chromosome 2"/>
</dbReference>
<dbReference type="Bgee" id="ENSBTAG00000003813">
    <property type="expression patterns" value="Expressed in oocyte and 107 other cell types or tissues"/>
</dbReference>
<dbReference type="GO" id="GO:0005743">
    <property type="term" value="C:mitochondrial inner membrane"/>
    <property type="evidence" value="ECO:0000318"/>
    <property type="project" value="GO_Central"/>
</dbReference>
<dbReference type="GO" id="GO:0005524">
    <property type="term" value="F:ATP binding"/>
    <property type="evidence" value="ECO:0007669"/>
    <property type="project" value="UniProtKB-KW"/>
</dbReference>
<dbReference type="GO" id="GO:0016887">
    <property type="term" value="F:ATP hydrolysis activity"/>
    <property type="evidence" value="ECO:0007669"/>
    <property type="project" value="Ensembl"/>
</dbReference>
<dbReference type="GO" id="GO:0033617">
    <property type="term" value="P:mitochondrial cytochrome c oxidase assembly"/>
    <property type="evidence" value="ECO:0007669"/>
    <property type="project" value="Ensembl"/>
</dbReference>
<dbReference type="GO" id="GO:0032981">
    <property type="term" value="P:mitochondrial respiratory chain complex I assembly"/>
    <property type="evidence" value="ECO:0007669"/>
    <property type="project" value="Ensembl"/>
</dbReference>
<dbReference type="GO" id="GO:0034551">
    <property type="term" value="P:mitochondrial respiratory chain complex III assembly"/>
    <property type="evidence" value="ECO:0000318"/>
    <property type="project" value="GO_Central"/>
</dbReference>
<dbReference type="GO" id="GO:0032979">
    <property type="term" value="P:protein insertion into mitochondrial inner membrane from matrix"/>
    <property type="evidence" value="ECO:0000318"/>
    <property type="project" value="GO_Central"/>
</dbReference>
<dbReference type="CDD" id="cd19510">
    <property type="entry name" value="RecA-like_BCS1"/>
    <property type="match status" value="1"/>
</dbReference>
<dbReference type="FunFam" id="3.40.50.300:FF:000768">
    <property type="entry name" value="Probable mitochondrial chaperone bcs1"/>
    <property type="match status" value="1"/>
</dbReference>
<dbReference type="Gene3D" id="3.40.50.300">
    <property type="entry name" value="P-loop containing nucleotide triphosphate hydrolases"/>
    <property type="match status" value="1"/>
</dbReference>
<dbReference type="InterPro" id="IPR003593">
    <property type="entry name" value="AAA+_ATPase"/>
</dbReference>
<dbReference type="InterPro" id="IPR003959">
    <property type="entry name" value="ATPase_AAA_core"/>
</dbReference>
<dbReference type="InterPro" id="IPR003960">
    <property type="entry name" value="ATPase_AAA_CS"/>
</dbReference>
<dbReference type="InterPro" id="IPR014851">
    <property type="entry name" value="BCS1_N"/>
</dbReference>
<dbReference type="InterPro" id="IPR050747">
    <property type="entry name" value="Mitochondrial_chaperone_BCS1"/>
</dbReference>
<dbReference type="InterPro" id="IPR027417">
    <property type="entry name" value="P-loop_NTPase"/>
</dbReference>
<dbReference type="PANTHER" id="PTHR23070">
    <property type="entry name" value="BCS1 AAA-TYPE ATPASE"/>
    <property type="match status" value="1"/>
</dbReference>
<dbReference type="Pfam" id="PF00004">
    <property type="entry name" value="AAA"/>
    <property type="match status" value="1"/>
</dbReference>
<dbReference type="Pfam" id="PF25426">
    <property type="entry name" value="AAA_lid_BCS1"/>
    <property type="match status" value="1"/>
</dbReference>
<dbReference type="Pfam" id="PF08740">
    <property type="entry name" value="BCS1_N"/>
    <property type="match status" value="1"/>
</dbReference>
<dbReference type="SMART" id="SM00382">
    <property type="entry name" value="AAA"/>
    <property type="match status" value="1"/>
</dbReference>
<dbReference type="SMART" id="SM01024">
    <property type="entry name" value="BCS1_N"/>
    <property type="match status" value="1"/>
</dbReference>
<dbReference type="SUPFAM" id="SSF52540">
    <property type="entry name" value="P-loop containing nucleoside triphosphate hydrolases"/>
    <property type="match status" value="1"/>
</dbReference>
<dbReference type="PROSITE" id="PS00674">
    <property type="entry name" value="AAA"/>
    <property type="match status" value="1"/>
</dbReference>
<sequence length="419" mass="47504">MPLSDFVLALKDNPYFGAGFGLVGVGTALALARKGAQLGLVAFRRHYMITLEVPARDRSYAWLLSWLTRHSTRTQHLSVETTYLQHESGRISTKFEFVPSPGNHFIWYQGKWIRVERSREMQMIDLQTGTPWESVTFTALGTDRKVFFNILEEARELALQQEEGKTVMYTAVGSEWRPFGYPRRRRPLNSVVLEQGVTERIVRDIREFIDNPKWYIDRGIPYRRGYLLYGPPGCGKSSFITALAGELQHSICLLSLTDSSLSDDRLNHLLSVAPQQSLVLLEDVDAAFLSRDLAAENPIKYQGLGRLTFSGLLNALDGVASTEARIVFMTTNHIDRLDPALIRPGRVDMKEYVGHCSRWQLTQMFQRFYPGQATSLAENFADRVLQATTQISPAQVQGYFMLYKNDPAGAIQNAESLRR</sequence>
<reference key="1">
    <citation type="journal article" date="2005" name="BMC Genomics">
        <title>Characterization of 954 bovine full-CDS cDNA sequences.</title>
        <authorList>
            <person name="Harhay G.P."/>
            <person name="Sonstegard T.S."/>
            <person name="Keele J.W."/>
            <person name="Heaton M.P."/>
            <person name="Clawson M.L."/>
            <person name="Snelling W.M."/>
            <person name="Wiedmann R.T."/>
            <person name="Van Tassell C.P."/>
            <person name="Smith T.P.L."/>
        </authorList>
    </citation>
    <scope>NUCLEOTIDE SEQUENCE [LARGE SCALE MRNA]</scope>
</reference>
<reference key="2">
    <citation type="submission" date="2005-08" db="EMBL/GenBank/DDBJ databases">
        <authorList>
            <consortium name="NIH - Mammalian Gene Collection (MGC) project"/>
        </authorList>
    </citation>
    <scope>NUCLEOTIDE SEQUENCE [LARGE SCALE MRNA]</scope>
    <source>
        <strain>Hereford</strain>
        <tissue>Hypothalamus</tissue>
    </source>
</reference>
<name>BCS1_BOVIN</name>
<comment type="function">
    <text evidence="2">Chaperone necessary for the incorporation of Rieske iron-sulfur protein UQCRFS1 into the mitochondrial respiratory chain complex III (By similarity). Plays an important role in the maintenance of mitochondrial tubular networks, respiratory chain assembly and formation of the LETM1 complex (By similarity).</text>
</comment>
<comment type="catalytic activity">
    <reaction evidence="1">
        <text>ATP + H2O = ADP + phosphate + H(+)</text>
        <dbReference type="Rhea" id="RHEA:13065"/>
        <dbReference type="ChEBI" id="CHEBI:15377"/>
        <dbReference type="ChEBI" id="CHEBI:15378"/>
        <dbReference type="ChEBI" id="CHEBI:30616"/>
        <dbReference type="ChEBI" id="CHEBI:43474"/>
        <dbReference type="ChEBI" id="CHEBI:456216"/>
    </reaction>
    <physiologicalReaction direction="left-to-right" evidence="1">
        <dbReference type="Rhea" id="RHEA:13066"/>
    </physiologicalReaction>
</comment>
<comment type="subunit">
    <text evidence="2">Interacts with LETM1.</text>
</comment>
<comment type="subcellular location">
    <subcellularLocation>
        <location evidence="2">Mitochondrion inner membrane</location>
        <topology evidence="3">Single-pass membrane protein</topology>
    </subcellularLocation>
</comment>
<comment type="similarity">
    <text evidence="4">Belongs to the AAA ATPase family. BCS1 subfamily.</text>
</comment>